<proteinExistence type="inferred from homology"/>
<gene>
    <name evidence="1" type="primary">pheS</name>
    <name type="ordered locus">Tcr_1663</name>
</gene>
<comment type="catalytic activity">
    <reaction evidence="1">
        <text>tRNA(Phe) + L-phenylalanine + ATP = L-phenylalanyl-tRNA(Phe) + AMP + diphosphate + H(+)</text>
        <dbReference type="Rhea" id="RHEA:19413"/>
        <dbReference type="Rhea" id="RHEA-COMP:9668"/>
        <dbReference type="Rhea" id="RHEA-COMP:9699"/>
        <dbReference type="ChEBI" id="CHEBI:15378"/>
        <dbReference type="ChEBI" id="CHEBI:30616"/>
        <dbReference type="ChEBI" id="CHEBI:33019"/>
        <dbReference type="ChEBI" id="CHEBI:58095"/>
        <dbReference type="ChEBI" id="CHEBI:78442"/>
        <dbReference type="ChEBI" id="CHEBI:78531"/>
        <dbReference type="ChEBI" id="CHEBI:456215"/>
        <dbReference type="EC" id="6.1.1.20"/>
    </reaction>
</comment>
<comment type="cofactor">
    <cofactor evidence="1">
        <name>Mg(2+)</name>
        <dbReference type="ChEBI" id="CHEBI:18420"/>
    </cofactor>
    <text evidence="1">Binds 2 magnesium ions per tetramer.</text>
</comment>
<comment type="subunit">
    <text evidence="1">Tetramer of two alpha and two beta subunits.</text>
</comment>
<comment type="subcellular location">
    <subcellularLocation>
        <location evidence="1">Cytoplasm</location>
    </subcellularLocation>
</comment>
<comment type="similarity">
    <text evidence="1">Belongs to the class-II aminoacyl-tRNA synthetase family. Phe-tRNA synthetase alpha subunit type 1 subfamily.</text>
</comment>
<organism>
    <name type="scientific">Hydrogenovibrio crunogenus (strain DSM 25203 / XCL-2)</name>
    <name type="common">Thiomicrospira crunogena</name>
    <dbReference type="NCBI Taxonomy" id="317025"/>
    <lineage>
        <taxon>Bacteria</taxon>
        <taxon>Pseudomonadati</taxon>
        <taxon>Pseudomonadota</taxon>
        <taxon>Gammaproteobacteria</taxon>
        <taxon>Thiotrichales</taxon>
        <taxon>Piscirickettsiaceae</taxon>
        <taxon>Hydrogenovibrio</taxon>
    </lineage>
</organism>
<keyword id="KW-0030">Aminoacyl-tRNA synthetase</keyword>
<keyword id="KW-0067">ATP-binding</keyword>
<keyword id="KW-0963">Cytoplasm</keyword>
<keyword id="KW-0436">Ligase</keyword>
<keyword id="KW-0460">Magnesium</keyword>
<keyword id="KW-0479">Metal-binding</keyword>
<keyword id="KW-0547">Nucleotide-binding</keyword>
<keyword id="KW-0648">Protein biosynthesis</keyword>
<dbReference type="EC" id="6.1.1.20" evidence="1"/>
<dbReference type="EMBL" id="CP000109">
    <property type="protein sequence ID" value="ABB42255.1"/>
    <property type="molecule type" value="Genomic_DNA"/>
</dbReference>
<dbReference type="SMR" id="Q31F18"/>
<dbReference type="STRING" id="317025.Tcr_1663"/>
<dbReference type="KEGG" id="tcx:Tcr_1663"/>
<dbReference type="eggNOG" id="COG0016">
    <property type="taxonomic scope" value="Bacteria"/>
</dbReference>
<dbReference type="HOGENOM" id="CLU_025086_0_1_6"/>
<dbReference type="OrthoDB" id="9800719at2"/>
<dbReference type="GO" id="GO:0005737">
    <property type="term" value="C:cytoplasm"/>
    <property type="evidence" value="ECO:0007669"/>
    <property type="project" value="UniProtKB-SubCell"/>
</dbReference>
<dbReference type="GO" id="GO:0005524">
    <property type="term" value="F:ATP binding"/>
    <property type="evidence" value="ECO:0007669"/>
    <property type="project" value="UniProtKB-UniRule"/>
</dbReference>
<dbReference type="GO" id="GO:0000287">
    <property type="term" value="F:magnesium ion binding"/>
    <property type="evidence" value="ECO:0007669"/>
    <property type="project" value="UniProtKB-UniRule"/>
</dbReference>
<dbReference type="GO" id="GO:0004826">
    <property type="term" value="F:phenylalanine-tRNA ligase activity"/>
    <property type="evidence" value="ECO:0007669"/>
    <property type="project" value="UniProtKB-UniRule"/>
</dbReference>
<dbReference type="GO" id="GO:0000049">
    <property type="term" value="F:tRNA binding"/>
    <property type="evidence" value="ECO:0007669"/>
    <property type="project" value="InterPro"/>
</dbReference>
<dbReference type="GO" id="GO:0006432">
    <property type="term" value="P:phenylalanyl-tRNA aminoacylation"/>
    <property type="evidence" value="ECO:0007669"/>
    <property type="project" value="UniProtKB-UniRule"/>
</dbReference>
<dbReference type="CDD" id="cd00496">
    <property type="entry name" value="PheRS_alpha_core"/>
    <property type="match status" value="1"/>
</dbReference>
<dbReference type="FunFam" id="3.30.930.10:FF:000003">
    <property type="entry name" value="Phenylalanine--tRNA ligase alpha subunit"/>
    <property type="match status" value="1"/>
</dbReference>
<dbReference type="Gene3D" id="3.30.930.10">
    <property type="entry name" value="Bira Bifunctional Protein, Domain 2"/>
    <property type="match status" value="1"/>
</dbReference>
<dbReference type="HAMAP" id="MF_00281">
    <property type="entry name" value="Phe_tRNA_synth_alpha1"/>
    <property type="match status" value="1"/>
</dbReference>
<dbReference type="InterPro" id="IPR006195">
    <property type="entry name" value="aa-tRNA-synth_II"/>
</dbReference>
<dbReference type="InterPro" id="IPR045864">
    <property type="entry name" value="aa-tRNA-synth_II/BPL/LPL"/>
</dbReference>
<dbReference type="InterPro" id="IPR004529">
    <property type="entry name" value="Phe-tRNA-synth_IIc_asu"/>
</dbReference>
<dbReference type="InterPro" id="IPR004188">
    <property type="entry name" value="Phe-tRNA_ligase_II_N"/>
</dbReference>
<dbReference type="InterPro" id="IPR022911">
    <property type="entry name" value="Phe_tRNA_ligase_alpha1_bac"/>
</dbReference>
<dbReference type="InterPro" id="IPR002319">
    <property type="entry name" value="Phenylalanyl-tRNA_Synthase"/>
</dbReference>
<dbReference type="InterPro" id="IPR010978">
    <property type="entry name" value="tRNA-bd_arm"/>
</dbReference>
<dbReference type="NCBIfam" id="TIGR00468">
    <property type="entry name" value="pheS"/>
    <property type="match status" value="1"/>
</dbReference>
<dbReference type="PANTHER" id="PTHR11538:SF41">
    <property type="entry name" value="PHENYLALANINE--TRNA LIGASE, MITOCHONDRIAL"/>
    <property type="match status" value="1"/>
</dbReference>
<dbReference type="PANTHER" id="PTHR11538">
    <property type="entry name" value="PHENYLALANYL-TRNA SYNTHETASE"/>
    <property type="match status" value="1"/>
</dbReference>
<dbReference type="Pfam" id="PF02912">
    <property type="entry name" value="Phe_tRNA-synt_N"/>
    <property type="match status" value="1"/>
</dbReference>
<dbReference type="Pfam" id="PF01409">
    <property type="entry name" value="tRNA-synt_2d"/>
    <property type="match status" value="1"/>
</dbReference>
<dbReference type="SUPFAM" id="SSF55681">
    <property type="entry name" value="Class II aaRS and biotin synthetases"/>
    <property type="match status" value="1"/>
</dbReference>
<dbReference type="SUPFAM" id="SSF46589">
    <property type="entry name" value="tRNA-binding arm"/>
    <property type="match status" value="1"/>
</dbReference>
<dbReference type="PROSITE" id="PS50862">
    <property type="entry name" value="AA_TRNA_LIGASE_II"/>
    <property type="match status" value="1"/>
</dbReference>
<evidence type="ECO:0000255" key="1">
    <source>
        <dbReference type="HAMAP-Rule" id="MF_00281"/>
    </source>
</evidence>
<reference key="1">
    <citation type="journal article" date="2006" name="PLoS Biol.">
        <title>The genome of deep-sea vent chemolithoautotroph Thiomicrospira crunogena XCL-2.</title>
        <authorList>
            <person name="Scott K.M."/>
            <person name="Sievert S.M."/>
            <person name="Abril F.N."/>
            <person name="Ball L.A."/>
            <person name="Barrett C.J."/>
            <person name="Blake R.A."/>
            <person name="Boller A.J."/>
            <person name="Chain P.S.G."/>
            <person name="Clark J.A."/>
            <person name="Davis C.R."/>
            <person name="Detter C."/>
            <person name="Do K.F."/>
            <person name="Dobrinski K.P."/>
            <person name="Faza B.I."/>
            <person name="Fitzpatrick K.A."/>
            <person name="Freyermuth S.K."/>
            <person name="Harmer T.L."/>
            <person name="Hauser L.J."/>
            <person name="Huegler M."/>
            <person name="Kerfeld C.A."/>
            <person name="Klotz M.G."/>
            <person name="Kong W.W."/>
            <person name="Land M."/>
            <person name="Lapidus A."/>
            <person name="Larimer F.W."/>
            <person name="Longo D.L."/>
            <person name="Lucas S."/>
            <person name="Malfatti S.A."/>
            <person name="Massey S.E."/>
            <person name="Martin D.D."/>
            <person name="McCuddin Z."/>
            <person name="Meyer F."/>
            <person name="Moore J.L."/>
            <person name="Ocampo L.H. Jr."/>
            <person name="Paul J.H."/>
            <person name="Paulsen I.T."/>
            <person name="Reep D.K."/>
            <person name="Ren Q."/>
            <person name="Ross R.L."/>
            <person name="Sato P.Y."/>
            <person name="Thomas P."/>
            <person name="Tinkham L.E."/>
            <person name="Zeruth G.T."/>
        </authorList>
    </citation>
    <scope>NUCLEOTIDE SEQUENCE [LARGE SCALE GENOMIC DNA]</scope>
    <source>
        <strain>DSM 25203 / XCL-2</strain>
    </source>
</reference>
<protein>
    <recommendedName>
        <fullName evidence="1">Phenylalanine--tRNA ligase alpha subunit</fullName>
        <ecNumber evidence="1">6.1.1.20</ecNumber>
    </recommendedName>
    <alternativeName>
        <fullName evidence="1">Phenylalanyl-tRNA synthetase alpha subunit</fullName>
        <shortName evidence="1">PheRS</shortName>
    </alternativeName>
</protein>
<feature type="chain" id="PRO_0000232035" description="Phenylalanine--tRNA ligase alpha subunit">
    <location>
        <begin position="1"/>
        <end position="332"/>
    </location>
</feature>
<feature type="binding site" evidence="1">
    <location>
        <position position="254"/>
    </location>
    <ligand>
        <name>Mg(2+)</name>
        <dbReference type="ChEBI" id="CHEBI:18420"/>
        <note>shared with beta subunit</note>
    </ligand>
</feature>
<sequence length="332" mass="37660">MQEKLQAIVAQAKETIHSVSELVHLDEIRVQYLGKKGELTAMMKTLGQLSAEERPKAGQIINEAKQSVQTFLSEKKAELEDAILAAKLAGETIDVSLPGRGLDTGGLHPVTRTLRRIETIFSKAGFDVATGPEIEDDWHNFEALNIPETHPARAMHDTFYFDENTVLRTHTSGVQIRTMEEKDAPMRIIAPGRVYRCDSDQTHTPMFHQVEGLIIEENTSFAQLRTLIIEFLRQFFEDENLKVRFRPSYFPFTEPSAEVDIATNLFGDGRWIEVLGCGMVHPNVLKNVDVDSEKYTGLAFGLGVERLAMLRYGVTDLRQFFENDLRFLKQFK</sequence>
<accession>Q31F18</accession>
<name>SYFA_HYDCU</name>